<comment type="catalytic activity">
    <reaction evidence="1">
        <text>L-histidinol phosphate + 2-oxoglutarate = 3-(imidazol-4-yl)-2-oxopropyl phosphate + L-glutamate</text>
        <dbReference type="Rhea" id="RHEA:23744"/>
        <dbReference type="ChEBI" id="CHEBI:16810"/>
        <dbReference type="ChEBI" id="CHEBI:29985"/>
        <dbReference type="ChEBI" id="CHEBI:57766"/>
        <dbReference type="ChEBI" id="CHEBI:57980"/>
        <dbReference type="EC" id="2.6.1.9"/>
    </reaction>
</comment>
<comment type="cofactor">
    <cofactor evidence="1">
        <name>pyridoxal 5'-phosphate</name>
        <dbReference type="ChEBI" id="CHEBI:597326"/>
    </cofactor>
</comment>
<comment type="pathway">
    <text evidence="1">Amino-acid biosynthesis; L-histidine biosynthesis; L-histidine from 5-phospho-alpha-D-ribose 1-diphosphate: step 7/9.</text>
</comment>
<comment type="subunit">
    <text evidence="1">Homodimer.</text>
</comment>
<comment type="similarity">
    <text evidence="1">Belongs to the class-II pyridoxal-phosphate-dependent aminotransferase family. Histidinol-phosphate aminotransferase subfamily.</text>
</comment>
<name>HIS8_CLOBJ</name>
<keyword id="KW-0028">Amino-acid biosynthesis</keyword>
<keyword id="KW-0032">Aminotransferase</keyword>
<keyword id="KW-0368">Histidine biosynthesis</keyword>
<keyword id="KW-0663">Pyridoxal phosphate</keyword>
<keyword id="KW-0808">Transferase</keyword>
<gene>
    <name evidence="1" type="primary">hisC</name>
    <name type="ordered locus">CLM_1812</name>
</gene>
<evidence type="ECO:0000255" key="1">
    <source>
        <dbReference type="HAMAP-Rule" id="MF_01023"/>
    </source>
</evidence>
<accession>C1FN41</accession>
<dbReference type="EC" id="2.6.1.9" evidence="1"/>
<dbReference type="EMBL" id="CP001581">
    <property type="protein sequence ID" value="ACO85753.1"/>
    <property type="molecule type" value="Genomic_DNA"/>
</dbReference>
<dbReference type="RefSeq" id="WP_003358770.1">
    <property type="nucleotide sequence ID" value="NC_012563.1"/>
</dbReference>
<dbReference type="SMR" id="C1FN41"/>
<dbReference type="KEGG" id="cby:CLM_1812"/>
<dbReference type="eggNOG" id="COG0079">
    <property type="taxonomic scope" value="Bacteria"/>
</dbReference>
<dbReference type="HOGENOM" id="CLU_017584_3_0_9"/>
<dbReference type="UniPathway" id="UPA00031">
    <property type="reaction ID" value="UER00012"/>
</dbReference>
<dbReference type="Proteomes" id="UP000001374">
    <property type="component" value="Chromosome"/>
</dbReference>
<dbReference type="GO" id="GO:0004400">
    <property type="term" value="F:histidinol-phosphate transaminase activity"/>
    <property type="evidence" value="ECO:0007669"/>
    <property type="project" value="UniProtKB-UniRule"/>
</dbReference>
<dbReference type="GO" id="GO:0030170">
    <property type="term" value="F:pyridoxal phosphate binding"/>
    <property type="evidence" value="ECO:0007669"/>
    <property type="project" value="InterPro"/>
</dbReference>
<dbReference type="GO" id="GO:0000105">
    <property type="term" value="P:L-histidine biosynthetic process"/>
    <property type="evidence" value="ECO:0007669"/>
    <property type="project" value="UniProtKB-UniRule"/>
</dbReference>
<dbReference type="CDD" id="cd00609">
    <property type="entry name" value="AAT_like"/>
    <property type="match status" value="1"/>
</dbReference>
<dbReference type="Gene3D" id="3.90.1150.10">
    <property type="entry name" value="Aspartate Aminotransferase, domain 1"/>
    <property type="match status" value="1"/>
</dbReference>
<dbReference type="Gene3D" id="3.40.640.10">
    <property type="entry name" value="Type I PLP-dependent aspartate aminotransferase-like (Major domain)"/>
    <property type="match status" value="1"/>
</dbReference>
<dbReference type="HAMAP" id="MF_01023">
    <property type="entry name" value="HisC_aminotrans_2"/>
    <property type="match status" value="1"/>
</dbReference>
<dbReference type="InterPro" id="IPR001917">
    <property type="entry name" value="Aminotrans_II_pyridoxalP_BS"/>
</dbReference>
<dbReference type="InterPro" id="IPR004839">
    <property type="entry name" value="Aminotransferase_I/II_large"/>
</dbReference>
<dbReference type="InterPro" id="IPR005861">
    <property type="entry name" value="HisP_aminotrans"/>
</dbReference>
<dbReference type="InterPro" id="IPR050106">
    <property type="entry name" value="HistidinolP_aminotransfase"/>
</dbReference>
<dbReference type="InterPro" id="IPR015424">
    <property type="entry name" value="PyrdxlP-dep_Trfase"/>
</dbReference>
<dbReference type="InterPro" id="IPR015421">
    <property type="entry name" value="PyrdxlP-dep_Trfase_major"/>
</dbReference>
<dbReference type="InterPro" id="IPR015422">
    <property type="entry name" value="PyrdxlP-dep_Trfase_small"/>
</dbReference>
<dbReference type="NCBIfam" id="TIGR01141">
    <property type="entry name" value="hisC"/>
    <property type="match status" value="1"/>
</dbReference>
<dbReference type="PANTHER" id="PTHR43643:SF3">
    <property type="entry name" value="HISTIDINOL-PHOSPHATE AMINOTRANSFERASE"/>
    <property type="match status" value="1"/>
</dbReference>
<dbReference type="PANTHER" id="PTHR43643">
    <property type="entry name" value="HISTIDINOL-PHOSPHATE AMINOTRANSFERASE 2"/>
    <property type="match status" value="1"/>
</dbReference>
<dbReference type="Pfam" id="PF00155">
    <property type="entry name" value="Aminotran_1_2"/>
    <property type="match status" value="1"/>
</dbReference>
<dbReference type="SUPFAM" id="SSF53383">
    <property type="entry name" value="PLP-dependent transferases"/>
    <property type="match status" value="1"/>
</dbReference>
<dbReference type="PROSITE" id="PS00599">
    <property type="entry name" value="AA_TRANSFER_CLASS_2"/>
    <property type="match status" value="1"/>
</dbReference>
<reference key="1">
    <citation type="submission" date="2008-10" db="EMBL/GenBank/DDBJ databases">
        <title>Genome sequence of Clostridium botulinum A2 Kyoto.</title>
        <authorList>
            <person name="Shrivastava S."/>
            <person name="Brinkac L.M."/>
            <person name="Brown J.L."/>
            <person name="Bruce D."/>
            <person name="Detter C.C."/>
            <person name="Johnson E.A."/>
            <person name="Munk C.A."/>
            <person name="Smith L.A."/>
            <person name="Smith T.J."/>
            <person name="Sutton G."/>
            <person name="Brettin T.S."/>
        </authorList>
    </citation>
    <scope>NUCLEOTIDE SEQUENCE [LARGE SCALE GENOMIC DNA]</scope>
    <source>
        <strain>Kyoto / Type A2</strain>
    </source>
</reference>
<protein>
    <recommendedName>
        <fullName evidence="1">Histidinol-phosphate aminotransferase</fullName>
        <ecNumber evidence="1">2.6.1.9</ecNumber>
    </recommendedName>
    <alternativeName>
        <fullName evidence="1">Imidazole acetol-phosphate transaminase</fullName>
    </alternativeName>
</protein>
<feature type="chain" id="PRO_1000149087" description="Histidinol-phosphate aminotransferase">
    <location>
        <begin position="1"/>
        <end position="354"/>
    </location>
</feature>
<feature type="modified residue" description="N6-(pyridoxal phosphate)lysine" evidence="1">
    <location>
        <position position="210"/>
    </location>
</feature>
<sequence length="354" mass="40494">MSKYWSNITKDIEPYVCGEQPKNKKIIKLNTNENPYPPSPKVLQAIENAAKDDLRLYPDPNCDALRKTIANYYNLSKEEVFIGNGSDEVLSLSFLTFFNPEETIVFSDISYSFYPVYANLYKLDYKLAKLKEDFSIDINDFKNARGGAVITNPNAPTGVYLSLDSIKQILEDNINNVVMVDEAYIDFGGESSVSLIKDYPNLLVIQTLSKSRSLAGMRIGFALGQKELIEGLNRIKNSFNSYTIDRISSLAAIEAIKDEEYFKECTLKVIKTRNWTINELGKIGFKIIPSKANFIFITHDTYQAEDIFIKLKDENVLVRYFNKDRISNYLRVSIGSKEEMEIFMDKIKKIINKL</sequence>
<proteinExistence type="inferred from homology"/>
<organism>
    <name type="scientific">Clostridium botulinum (strain Kyoto / Type A2)</name>
    <dbReference type="NCBI Taxonomy" id="536232"/>
    <lineage>
        <taxon>Bacteria</taxon>
        <taxon>Bacillati</taxon>
        <taxon>Bacillota</taxon>
        <taxon>Clostridia</taxon>
        <taxon>Eubacteriales</taxon>
        <taxon>Clostridiaceae</taxon>
        <taxon>Clostridium</taxon>
    </lineage>
</organism>